<accession>O10335</accession>
<gene>
    <name type="ORF">ORF85</name>
</gene>
<organism>
    <name type="scientific">Orgyia pseudotsugata multicapsid polyhedrosis virus</name>
    <name type="common">OpMNPV</name>
    <dbReference type="NCBI Taxonomy" id="262177"/>
    <lineage>
        <taxon>Viruses</taxon>
        <taxon>Viruses incertae sedis</taxon>
        <taxon>Naldaviricetes</taxon>
        <taxon>Lefavirales</taxon>
        <taxon>Baculoviridae</taxon>
        <taxon>Alphabaculovirus</taxon>
        <taxon>Alphabaculovirus orpseudotsugatae</taxon>
    </lineage>
</organism>
<reference key="1">
    <citation type="journal article" date="1997" name="Virology">
        <title>The sequence of the Orgyia pseudotsugata multinucleocapsid nuclear polyhedrosis virus genome.</title>
        <authorList>
            <person name="Ahrens C.H."/>
            <person name="Russell R.R."/>
            <person name="Funk C.J."/>
            <person name="Evans J."/>
            <person name="Harwood S."/>
            <person name="Rohrmann G.F."/>
        </authorList>
    </citation>
    <scope>NUCLEOTIDE SEQUENCE [LARGE SCALE GENOMIC DNA]</scope>
</reference>
<evidence type="ECO:0000256" key="1">
    <source>
        <dbReference type="SAM" id="MobiDB-lite"/>
    </source>
</evidence>
<sequence>MANTSSTTSDIVVRARVLIADDEGTLLEFEAENEHCLMRGAHEVRVIASPELDALHNGPYNEIALGDYTFHFNLVAANRFGAQVMLFAKRDDIKVSGAVFRLKVWNSKKRAVAPPHHEPEPVPAEEGAVADRAEPESGDAPPSPKKQKLDEREQD</sequence>
<keyword id="KW-1185">Reference proteome</keyword>
<name>TLP20_NPVOP</name>
<dbReference type="EMBL" id="U75930">
    <property type="protein sequence ID" value="AAC59084.1"/>
    <property type="molecule type" value="Genomic_DNA"/>
</dbReference>
<dbReference type="RefSeq" id="NP_046241.1">
    <property type="nucleotide sequence ID" value="NC_001875.2"/>
</dbReference>
<dbReference type="SMR" id="O10335"/>
<dbReference type="KEGG" id="vg:912046"/>
<dbReference type="OrthoDB" id="13584at10239"/>
<dbReference type="Proteomes" id="UP000009248">
    <property type="component" value="Genome"/>
</dbReference>
<dbReference type="CDD" id="cd00235">
    <property type="entry name" value="TLP-20"/>
    <property type="match status" value="1"/>
</dbReference>
<dbReference type="Gene3D" id="2.70.40.20">
    <property type="entry name" value="Baculovirus telokin-like protein 20"/>
    <property type="match status" value="1"/>
</dbReference>
<dbReference type="InterPro" id="IPR009092">
    <property type="entry name" value="Telokin-like_Tlp20_baculovir"/>
</dbReference>
<dbReference type="InterPro" id="IPR036731">
    <property type="entry name" value="Tlp20_sf"/>
</dbReference>
<dbReference type="Pfam" id="PF06088">
    <property type="entry name" value="TLP-20"/>
    <property type="match status" value="1"/>
</dbReference>
<dbReference type="SUPFAM" id="SSF51289">
    <property type="entry name" value="Tlp20, baculovirus telokin-like protein"/>
    <property type="match status" value="1"/>
</dbReference>
<protein>
    <recommendedName>
        <fullName>Telokin-like protein 20 homolog</fullName>
    </recommendedName>
</protein>
<proteinExistence type="predicted"/>
<organismHost>
    <name type="scientific">Orgyia pseudotsugata</name>
    <name type="common">Douglas-fir tussock moth</name>
    <dbReference type="NCBI Taxonomy" id="33414"/>
</organismHost>
<feature type="chain" id="PRO_0000132852" description="Telokin-like protein 20 homolog">
    <location>
        <begin position="1"/>
        <end position="155"/>
    </location>
</feature>
<feature type="region of interest" description="Disordered" evidence="1">
    <location>
        <begin position="109"/>
        <end position="155"/>
    </location>
</feature>